<feature type="chain" id="PRO_0000130341" description="Large ribosomal subunit protein uL29">
    <location>
        <begin position="1"/>
        <end position="65"/>
    </location>
</feature>
<protein>
    <recommendedName>
        <fullName evidence="1">Large ribosomal subunit protein uL29</fullName>
    </recommendedName>
    <alternativeName>
        <fullName evidence="2">50S ribosomal protein L29</fullName>
    </alternativeName>
</protein>
<name>RL29_ACIAD</name>
<reference key="1">
    <citation type="journal article" date="2004" name="Nucleic Acids Res.">
        <title>Unique features revealed by the genome sequence of Acinetobacter sp. ADP1, a versatile and naturally transformation competent bacterium.</title>
        <authorList>
            <person name="Barbe V."/>
            <person name="Vallenet D."/>
            <person name="Fonknechten N."/>
            <person name="Kreimeyer A."/>
            <person name="Oztas S."/>
            <person name="Labarre L."/>
            <person name="Cruveiller S."/>
            <person name="Robert C."/>
            <person name="Duprat S."/>
            <person name="Wincker P."/>
            <person name="Ornston L.N."/>
            <person name="Weissenbach J."/>
            <person name="Marliere P."/>
            <person name="Cohen G.N."/>
            <person name="Medigue C."/>
        </authorList>
    </citation>
    <scope>NUCLEOTIDE SEQUENCE [LARGE SCALE GENOMIC DNA]</scope>
    <source>
        <strain>ATCC 33305 / BD413 / ADP1</strain>
    </source>
</reference>
<evidence type="ECO:0000255" key="1">
    <source>
        <dbReference type="HAMAP-Rule" id="MF_00374"/>
    </source>
</evidence>
<evidence type="ECO:0000305" key="2"/>
<comment type="similarity">
    <text evidence="1">Belongs to the universal ribosomal protein uL29 family.</text>
</comment>
<accession>Q6F7S0</accession>
<keyword id="KW-0687">Ribonucleoprotein</keyword>
<keyword id="KW-0689">Ribosomal protein</keyword>
<sequence>MKTIDLREKSVEELKALLDEQQLNQFRLRMAKATGQLGKSHEVQIARKTIARIKTLLTEKQGNGQ</sequence>
<proteinExistence type="inferred from homology"/>
<dbReference type="EMBL" id="CR543861">
    <property type="protein sequence ID" value="CAG69895.1"/>
    <property type="molecule type" value="Genomic_DNA"/>
</dbReference>
<dbReference type="RefSeq" id="WP_004924115.1">
    <property type="nucleotide sequence ID" value="NC_005966.1"/>
</dbReference>
<dbReference type="SMR" id="Q6F7S0"/>
<dbReference type="STRING" id="202950.GCA_001485005_02944"/>
<dbReference type="GeneID" id="45235426"/>
<dbReference type="KEGG" id="aci:ACIAD3211"/>
<dbReference type="eggNOG" id="COG0255">
    <property type="taxonomic scope" value="Bacteria"/>
</dbReference>
<dbReference type="HOGENOM" id="CLU_158491_1_2_6"/>
<dbReference type="OrthoDB" id="9815192at2"/>
<dbReference type="BioCyc" id="ASP62977:ACIAD_RS14555-MONOMER"/>
<dbReference type="Proteomes" id="UP000000430">
    <property type="component" value="Chromosome"/>
</dbReference>
<dbReference type="GO" id="GO:0022625">
    <property type="term" value="C:cytosolic large ribosomal subunit"/>
    <property type="evidence" value="ECO:0007669"/>
    <property type="project" value="TreeGrafter"/>
</dbReference>
<dbReference type="GO" id="GO:0003735">
    <property type="term" value="F:structural constituent of ribosome"/>
    <property type="evidence" value="ECO:0007669"/>
    <property type="project" value="InterPro"/>
</dbReference>
<dbReference type="GO" id="GO:0006412">
    <property type="term" value="P:translation"/>
    <property type="evidence" value="ECO:0007669"/>
    <property type="project" value="UniProtKB-UniRule"/>
</dbReference>
<dbReference type="CDD" id="cd00427">
    <property type="entry name" value="Ribosomal_L29_HIP"/>
    <property type="match status" value="1"/>
</dbReference>
<dbReference type="FunFam" id="1.10.287.310:FF:000001">
    <property type="entry name" value="50S ribosomal protein L29"/>
    <property type="match status" value="1"/>
</dbReference>
<dbReference type="Gene3D" id="1.10.287.310">
    <property type="match status" value="1"/>
</dbReference>
<dbReference type="HAMAP" id="MF_00374">
    <property type="entry name" value="Ribosomal_uL29"/>
    <property type="match status" value="1"/>
</dbReference>
<dbReference type="InterPro" id="IPR050063">
    <property type="entry name" value="Ribosomal_protein_uL29"/>
</dbReference>
<dbReference type="InterPro" id="IPR001854">
    <property type="entry name" value="Ribosomal_uL29"/>
</dbReference>
<dbReference type="InterPro" id="IPR036049">
    <property type="entry name" value="Ribosomal_uL29_sf"/>
</dbReference>
<dbReference type="NCBIfam" id="TIGR00012">
    <property type="entry name" value="L29"/>
    <property type="match status" value="1"/>
</dbReference>
<dbReference type="PANTHER" id="PTHR10916">
    <property type="entry name" value="60S RIBOSOMAL PROTEIN L35/50S RIBOSOMAL PROTEIN L29"/>
    <property type="match status" value="1"/>
</dbReference>
<dbReference type="PANTHER" id="PTHR10916:SF0">
    <property type="entry name" value="LARGE RIBOSOMAL SUBUNIT PROTEIN UL29C"/>
    <property type="match status" value="1"/>
</dbReference>
<dbReference type="Pfam" id="PF00831">
    <property type="entry name" value="Ribosomal_L29"/>
    <property type="match status" value="1"/>
</dbReference>
<dbReference type="SUPFAM" id="SSF46561">
    <property type="entry name" value="Ribosomal protein L29 (L29p)"/>
    <property type="match status" value="1"/>
</dbReference>
<organism>
    <name type="scientific">Acinetobacter baylyi (strain ATCC 33305 / BD413 / ADP1)</name>
    <dbReference type="NCBI Taxonomy" id="62977"/>
    <lineage>
        <taxon>Bacteria</taxon>
        <taxon>Pseudomonadati</taxon>
        <taxon>Pseudomonadota</taxon>
        <taxon>Gammaproteobacteria</taxon>
        <taxon>Moraxellales</taxon>
        <taxon>Moraxellaceae</taxon>
        <taxon>Acinetobacter</taxon>
    </lineage>
</organism>
<gene>
    <name evidence="1" type="primary">rpmC</name>
    <name type="ordered locus">ACIAD3211</name>
</gene>